<name>YCJN_ECOLI</name>
<dbReference type="EMBL" id="U00096">
    <property type="protein sequence ID" value="AAC74392.1"/>
    <property type="molecule type" value="Genomic_DNA"/>
</dbReference>
<dbReference type="EMBL" id="AP009048">
    <property type="protein sequence ID" value="BAE76398.1"/>
    <property type="molecule type" value="Genomic_DNA"/>
</dbReference>
<dbReference type="PIR" id="A64880">
    <property type="entry name" value="A64880"/>
</dbReference>
<dbReference type="RefSeq" id="NP_415826.1">
    <property type="nucleotide sequence ID" value="NC_000913.3"/>
</dbReference>
<dbReference type="RefSeq" id="WP_000597466.1">
    <property type="nucleotide sequence ID" value="NZ_LN832404.1"/>
</dbReference>
<dbReference type="PDB" id="8VQK">
    <property type="method" value="X-ray"/>
    <property type="resolution" value="1.95 A"/>
    <property type="chains" value="A/B=1-430"/>
</dbReference>
<dbReference type="PDBsum" id="8VQK"/>
<dbReference type="SMR" id="P76042"/>
<dbReference type="BioGRID" id="4263229">
    <property type="interactions" value="49"/>
</dbReference>
<dbReference type="ComplexPortal" id="CPX-4389">
    <property type="entry name" value="YcjNOP ABC transporter complex"/>
</dbReference>
<dbReference type="DIP" id="DIP-11605N"/>
<dbReference type="FunCoup" id="P76042">
    <property type="interactions" value="191"/>
</dbReference>
<dbReference type="IntAct" id="P76042">
    <property type="interactions" value="1"/>
</dbReference>
<dbReference type="STRING" id="511145.b1310"/>
<dbReference type="TCDB" id="3.A.1.1.46">
    <property type="family name" value="the atp-binding cassette (abc) superfamily"/>
</dbReference>
<dbReference type="PaxDb" id="511145-b1310"/>
<dbReference type="DNASU" id="945696"/>
<dbReference type="EnsemblBacteria" id="AAC74392">
    <property type="protein sequence ID" value="AAC74392"/>
    <property type="gene ID" value="b1310"/>
</dbReference>
<dbReference type="GeneID" id="945696"/>
<dbReference type="KEGG" id="ecj:JW1303"/>
<dbReference type="KEGG" id="eco:b1310"/>
<dbReference type="KEGG" id="ecoc:C3026_07680"/>
<dbReference type="PATRIC" id="fig|1411691.4.peg.969"/>
<dbReference type="EchoBASE" id="EB3670"/>
<dbReference type="eggNOG" id="COG1653">
    <property type="taxonomic scope" value="Bacteria"/>
</dbReference>
<dbReference type="HOGENOM" id="CLU_031285_10_1_6"/>
<dbReference type="InParanoid" id="P76042"/>
<dbReference type="OMA" id="WPARWIP"/>
<dbReference type="OrthoDB" id="9804061at2"/>
<dbReference type="PhylomeDB" id="P76042"/>
<dbReference type="BioCyc" id="EcoCyc:YCJN-MONOMER"/>
<dbReference type="PRO" id="PR:P76042"/>
<dbReference type="Proteomes" id="UP000000625">
    <property type="component" value="Chromosome"/>
</dbReference>
<dbReference type="GO" id="GO:0055052">
    <property type="term" value="C:ATP-binding cassette (ABC) transporter complex, substrate-binding subunit-containing"/>
    <property type="evidence" value="ECO:0000303"/>
    <property type="project" value="ComplexPortal"/>
</dbReference>
<dbReference type="GO" id="GO:0016020">
    <property type="term" value="C:membrane"/>
    <property type="evidence" value="ECO:0000303"/>
    <property type="project" value="ComplexPortal"/>
</dbReference>
<dbReference type="GO" id="GO:0030288">
    <property type="term" value="C:outer membrane-bounded periplasmic space"/>
    <property type="evidence" value="ECO:0007669"/>
    <property type="project" value="UniProtKB-ARBA"/>
</dbReference>
<dbReference type="GO" id="GO:0005886">
    <property type="term" value="C:plasma membrane"/>
    <property type="evidence" value="ECO:0007005"/>
    <property type="project" value="EcoCyc"/>
</dbReference>
<dbReference type="GO" id="GO:0055085">
    <property type="term" value="P:transmembrane transport"/>
    <property type="evidence" value="ECO:0000303"/>
    <property type="project" value="ComplexPortal"/>
</dbReference>
<dbReference type="Gene3D" id="3.40.190.10">
    <property type="entry name" value="Periplasmic binding protein-like II"/>
    <property type="match status" value="1"/>
</dbReference>
<dbReference type="InterPro" id="IPR050490">
    <property type="entry name" value="Bact_solute-bd_prot1"/>
</dbReference>
<dbReference type="InterPro" id="IPR006059">
    <property type="entry name" value="SBP"/>
</dbReference>
<dbReference type="PANTHER" id="PTHR43649:SF34">
    <property type="entry name" value="ABC TRANSPORTER PERIPLASMIC-BINDING PROTEIN YCJN-RELATED"/>
    <property type="match status" value="1"/>
</dbReference>
<dbReference type="PANTHER" id="PTHR43649">
    <property type="entry name" value="ARABINOSE-BINDING PROTEIN-RELATED"/>
    <property type="match status" value="1"/>
</dbReference>
<dbReference type="Pfam" id="PF01547">
    <property type="entry name" value="SBP_bac_1"/>
    <property type="match status" value="1"/>
</dbReference>
<dbReference type="SUPFAM" id="SSF53850">
    <property type="entry name" value="Periplasmic binding protein-like II"/>
    <property type="match status" value="1"/>
</dbReference>
<dbReference type="PROSITE" id="PS51257">
    <property type="entry name" value="PROKAR_LIPOPROTEIN"/>
    <property type="match status" value="1"/>
</dbReference>
<evidence type="ECO:0000255" key="1"/>
<evidence type="ECO:0000305" key="2"/>
<evidence type="ECO:0007829" key="3">
    <source>
        <dbReference type="PDB" id="8VQK"/>
    </source>
</evidence>
<proteinExistence type="evidence at protein level"/>
<keyword id="KW-0002">3D-structure</keyword>
<keyword id="KW-0574">Periplasm</keyword>
<keyword id="KW-1185">Reference proteome</keyword>
<keyword id="KW-0732">Signal</keyword>
<keyword id="KW-0813">Transport</keyword>
<reference key="1">
    <citation type="journal article" date="1997" name="Science">
        <title>The complete genome sequence of Escherichia coli K-12.</title>
        <authorList>
            <person name="Blattner F.R."/>
            <person name="Plunkett G. III"/>
            <person name="Bloch C.A."/>
            <person name="Perna N.T."/>
            <person name="Burland V."/>
            <person name="Riley M."/>
            <person name="Collado-Vides J."/>
            <person name="Glasner J.D."/>
            <person name="Rode C.K."/>
            <person name="Mayhew G.F."/>
            <person name="Gregor J."/>
            <person name="Davis N.W."/>
            <person name="Kirkpatrick H.A."/>
            <person name="Goeden M.A."/>
            <person name="Rose D.J."/>
            <person name="Mau B."/>
            <person name="Shao Y."/>
        </authorList>
    </citation>
    <scope>NUCLEOTIDE SEQUENCE [LARGE SCALE GENOMIC DNA]</scope>
    <source>
        <strain>K12 / MG1655 / ATCC 47076</strain>
    </source>
</reference>
<reference key="2">
    <citation type="journal article" date="2006" name="Mol. Syst. Biol.">
        <title>Highly accurate genome sequences of Escherichia coli K-12 strains MG1655 and W3110.</title>
        <authorList>
            <person name="Hayashi K."/>
            <person name="Morooka N."/>
            <person name="Yamamoto Y."/>
            <person name="Fujita K."/>
            <person name="Isono K."/>
            <person name="Choi S."/>
            <person name="Ohtsubo E."/>
            <person name="Baba T."/>
            <person name="Wanner B.L."/>
            <person name="Mori H."/>
            <person name="Horiuchi T."/>
        </authorList>
    </citation>
    <scope>NUCLEOTIDE SEQUENCE [LARGE SCALE GENOMIC DNA]</scope>
    <source>
        <strain>K12 / W3110 / ATCC 27325 / DSM 5911</strain>
    </source>
</reference>
<organism>
    <name type="scientific">Escherichia coli (strain K12)</name>
    <dbReference type="NCBI Taxonomy" id="83333"/>
    <lineage>
        <taxon>Bacteria</taxon>
        <taxon>Pseudomonadati</taxon>
        <taxon>Pseudomonadota</taxon>
        <taxon>Gammaproteobacteria</taxon>
        <taxon>Enterobacterales</taxon>
        <taxon>Enterobacteriaceae</taxon>
        <taxon>Escherichia</taxon>
    </lineage>
</organism>
<gene>
    <name type="primary">ycjN</name>
    <name type="ordered locus">b1310</name>
    <name type="ordered locus">JW1303</name>
</gene>
<protein>
    <recommendedName>
        <fullName>Putative ABC transporter periplasmic-binding protein YcjN</fullName>
    </recommendedName>
</protein>
<comment type="function">
    <text>Probably part of the binding-protein-dependent transport system YcjNOP.</text>
</comment>
<comment type="subcellular location">
    <subcellularLocation>
        <location evidence="2">Periplasm</location>
    </subcellularLocation>
</comment>
<comment type="similarity">
    <text evidence="2">Belongs to the bacterial solute-binding protein 1 family.</text>
</comment>
<feature type="signal peptide" evidence="1">
    <location>
        <begin position="1"/>
        <end position="19"/>
    </location>
</feature>
<feature type="chain" id="PRO_0000031713" description="Putative ABC transporter periplasmic-binding protein YcjN">
    <location>
        <begin position="20"/>
        <end position="430"/>
    </location>
</feature>
<feature type="strand" evidence="3">
    <location>
        <begin position="29"/>
        <end position="36"/>
    </location>
</feature>
<feature type="helix" evidence="3">
    <location>
        <begin position="40"/>
        <end position="56"/>
    </location>
</feature>
<feature type="strand" evidence="3">
    <location>
        <begin position="60"/>
        <end position="66"/>
    </location>
</feature>
<feature type="helix" evidence="3">
    <location>
        <begin position="69"/>
        <end position="71"/>
    </location>
</feature>
<feature type="helix" evidence="3">
    <location>
        <begin position="72"/>
        <end position="80"/>
    </location>
</feature>
<feature type="turn" evidence="3">
    <location>
        <begin position="81"/>
        <end position="83"/>
    </location>
</feature>
<feature type="strand" evidence="3">
    <location>
        <begin position="87"/>
        <end position="92"/>
    </location>
</feature>
<feature type="helix" evidence="3">
    <location>
        <begin position="93"/>
        <end position="101"/>
    </location>
</feature>
<feature type="helix" evidence="3">
    <location>
        <begin position="107"/>
        <end position="117"/>
    </location>
</feature>
<feature type="helix" evidence="3">
    <location>
        <begin position="119"/>
        <end position="121"/>
    </location>
</feature>
<feature type="helix" evidence="3">
    <location>
        <begin position="126"/>
        <end position="129"/>
    </location>
</feature>
<feature type="strand" evidence="3">
    <location>
        <begin position="135"/>
        <end position="139"/>
    </location>
</feature>
<feature type="strand" evidence="3">
    <location>
        <begin position="141"/>
        <end position="153"/>
    </location>
</feature>
<feature type="helix" evidence="3">
    <location>
        <begin position="154"/>
        <end position="158"/>
    </location>
</feature>
<feature type="turn" evidence="3">
    <location>
        <begin position="159"/>
        <end position="161"/>
    </location>
</feature>
<feature type="helix" evidence="3">
    <location>
        <begin position="168"/>
        <end position="178"/>
    </location>
</feature>
<feature type="helix" evidence="3">
    <location>
        <begin position="181"/>
        <end position="183"/>
    </location>
</feature>
<feature type="strand" evidence="3">
    <location>
        <begin position="193"/>
        <end position="195"/>
    </location>
</feature>
<feature type="helix" evidence="3">
    <location>
        <begin position="196"/>
        <end position="208"/>
    </location>
</feature>
<feature type="helix" evidence="3">
    <location>
        <begin position="225"/>
        <end position="238"/>
    </location>
</feature>
<feature type="helix" evidence="3">
    <location>
        <begin position="248"/>
        <end position="256"/>
    </location>
</feature>
<feature type="strand" evidence="3">
    <location>
        <begin position="261"/>
        <end position="266"/>
    </location>
</feature>
<feature type="helix" evidence="3">
    <location>
        <begin position="267"/>
        <end position="269"/>
    </location>
</feature>
<feature type="helix" evidence="3">
    <location>
        <begin position="270"/>
        <end position="276"/>
    </location>
</feature>
<feature type="helix" evidence="3">
    <location>
        <begin position="279"/>
        <end position="281"/>
    </location>
</feature>
<feature type="strand" evidence="3">
    <location>
        <begin position="282"/>
        <end position="285"/>
    </location>
</feature>
<feature type="strand" evidence="3">
    <location>
        <begin position="288"/>
        <end position="292"/>
    </location>
</feature>
<feature type="strand" evidence="3">
    <location>
        <begin position="294"/>
        <end position="306"/>
    </location>
</feature>
<feature type="helix" evidence="3">
    <location>
        <begin position="309"/>
        <end position="322"/>
    </location>
</feature>
<feature type="helix" evidence="3">
    <location>
        <begin position="325"/>
        <end position="332"/>
    </location>
</feature>
<feature type="turn" evidence="3">
    <location>
        <begin position="336"/>
        <end position="338"/>
    </location>
</feature>
<feature type="helix" evidence="3">
    <location>
        <begin position="346"/>
        <end position="348"/>
    </location>
</feature>
<feature type="helix" evidence="3">
    <location>
        <begin position="350"/>
        <end position="353"/>
    </location>
</feature>
<feature type="helix" evidence="3">
    <location>
        <begin position="356"/>
        <end position="361"/>
    </location>
</feature>
<feature type="helix" evidence="3">
    <location>
        <begin position="364"/>
        <end position="370"/>
    </location>
</feature>
<feature type="helix" evidence="3">
    <location>
        <begin position="371"/>
        <end position="374"/>
    </location>
</feature>
<feature type="helix" evidence="3">
    <location>
        <begin position="389"/>
        <end position="395"/>
    </location>
</feature>
<feature type="helix" evidence="3">
    <location>
        <begin position="397"/>
        <end position="406"/>
    </location>
</feature>
<feature type="helix" evidence="3">
    <location>
        <begin position="412"/>
        <end position="426"/>
    </location>
</feature>
<accession>P76042</accession>
<accession>Q2MBF8</accession>
<sequence length="430" mass="46808">MIKSKIVLLSALVSCALISGCKEENKTNVSIEFMHSSVEQERQAVISKLIARFEKENPGITVKQVPVEEDAYNTKVITLSRSGSLPEVIETSHDYAKVMDKEQLIDRKAVATVISNVGEGAFYDGVLRIVRTEDGSAWTGVPVSAWIGGIWYRKDVLAKAGLEEPKNWQQLLDVAQKLNDPANKKYGIALPTAESVLTEQSFSQFALSNQANVFNAEGKITLDTPEMMQALTYYRDLTANTMPGSNDIMEVKDAFMNGTAPMAIYSTYILPAVIKEGDPKNVGFVVPTEKNSAVYGMLTSLTITAGQKTEETEAAEKFVTFMEQADNIADWVMMSPGAALPVNKAVVTTATWKDNDVIKALGELPNQLIGELPNIQVFGAVGDKNFTRMGDVTGSGVVSSMVHNVTVGKADLSTTLQASQKKLDELIEQH</sequence>